<accession>P12704</accession>
<dbReference type="PIR" id="S07220">
    <property type="entry name" value="INDF"/>
</dbReference>
<dbReference type="GO" id="GO:0005615">
    <property type="term" value="C:extracellular space"/>
    <property type="evidence" value="ECO:0007669"/>
    <property type="project" value="TreeGrafter"/>
</dbReference>
<dbReference type="GO" id="GO:0005179">
    <property type="term" value="F:hormone activity"/>
    <property type="evidence" value="ECO:0007669"/>
    <property type="project" value="UniProtKB-KW"/>
</dbReference>
<dbReference type="GO" id="GO:0006006">
    <property type="term" value="P:glucose metabolic process"/>
    <property type="evidence" value="ECO:0007669"/>
    <property type="project" value="UniProtKB-KW"/>
</dbReference>
<dbReference type="CDD" id="cd04367">
    <property type="entry name" value="IlGF_insulin_like"/>
    <property type="match status" value="1"/>
</dbReference>
<dbReference type="Gene3D" id="1.10.100.10">
    <property type="entry name" value="Insulin-like"/>
    <property type="match status" value="1"/>
</dbReference>
<dbReference type="InterPro" id="IPR004825">
    <property type="entry name" value="Insulin"/>
</dbReference>
<dbReference type="InterPro" id="IPR016179">
    <property type="entry name" value="Insulin-like"/>
</dbReference>
<dbReference type="InterPro" id="IPR036438">
    <property type="entry name" value="Insulin-like_sf"/>
</dbReference>
<dbReference type="InterPro" id="IPR022353">
    <property type="entry name" value="Insulin_CS"/>
</dbReference>
<dbReference type="InterPro" id="IPR022352">
    <property type="entry name" value="Insulin_family"/>
</dbReference>
<dbReference type="PANTHER" id="PTHR11454:SF9">
    <property type="entry name" value="INSULIN"/>
    <property type="match status" value="1"/>
</dbReference>
<dbReference type="PANTHER" id="PTHR11454">
    <property type="entry name" value="INSULIN/INSULIN GROWTH FACTOR"/>
    <property type="match status" value="1"/>
</dbReference>
<dbReference type="Pfam" id="PF00049">
    <property type="entry name" value="Insulin"/>
    <property type="match status" value="2"/>
</dbReference>
<dbReference type="PRINTS" id="PR00277">
    <property type="entry name" value="INSULIN"/>
</dbReference>
<dbReference type="PRINTS" id="PR00276">
    <property type="entry name" value="INSULINFAMLY"/>
</dbReference>
<dbReference type="SMART" id="SM00078">
    <property type="entry name" value="IlGF"/>
    <property type="match status" value="1"/>
</dbReference>
<dbReference type="SUPFAM" id="SSF56994">
    <property type="entry name" value="Insulin-like"/>
    <property type="match status" value="1"/>
</dbReference>
<dbReference type="PROSITE" id="PS00262">
    <property type="entry name" value="INSULIN"/>
    <property type="match status" value="1"/>
</dbReference>
<keyword id="KW-0119">Carbohydrate metabolism</keyword>
<keyword id="KW-0903">Direct protein sequencing</keyword>
<keyword id="KW-1015">Disulfide bond</keyword>
<keyword id="KW-0313">Glucose metabolism</keyword>
<keyword id="KW-0372">Hormone</keyword>
<keyword id="KW-0964">Secreted</keyword>
<sequence length="54" mass="6094">LPSQHLCGSHLVEALYFVCGPKGFYYLPKBZVGIVEHCCHNTCSLYDLEGYCNQ</sequence>
<evidence type="ECO:0000269" key="1">
    <source>
    </source>
</evidence>
<evidence type="ECO:0000305" key="2"/>
<gene>
    <name type="primary">ins</name>
</gene>
<name>INS_SQUAC</name>
<protein>
    <recommendedName>
        <fullName>Insulin</fullName>
    </recommendedName>
    <component>
        <recommendedName>
            <fullName>Insulin B chain</fullName>
        </recommendedName>
    </component>
    <component>
        <recommendedName>
            <fullName>Insulin A chain</fullName>
        </recommendedName>
    </component>
</protein>
<proteinExistence type="evidence at protein level"/>
<comment type="function">
    <text>Insulin decreases blood glucose concentration. It increases cell permeability to monosaccharides, amino acids and fatty acids. It accelerates glycolysis, the pentose phosphate cycle, and glycogen synthesis in liver.</text>
</comment>
<comment type="subunit">
    <text>Heterodimer of a B chain and an A chain linked by two disulfide bonds.</text>
</comment>
<comment type="subcellular location">
    <subcellularLocation>
        <location>Secreted</location>
    </subcellularLocation>
</comment>
<comment type="similarity">
    <text evidence="2">Belongs to the insulin family.</text>
</comment>
<reference key="1">
    <citation type="journal article" date="1983" name="Eur. J. Biochem.">
        <title>Dogfish insulin. Primary structure, conformation and biological properties of an elasmobranchial insulin.</title>
        <authorList>
            <person name="Bajaj J."/>
            <person name="Blundell T.L."/>
            <person name="Pitts J.E."/>
            <person name="Wood S.P."/>
            <person name="Tatnell M.A."/>
            <person name="Falkmer S."/>
            <person name="Emdin S.O."/>
            <person name="Gowan L.K."/>
            <person name="Crow H."/>
            <person name="Schwabe C."/>
            <person name="Wollmer A."/>
            <person name="Strassburger W."/>
        </authorList>
    </citation>
    <scope>PROTEIN SEQUENCE</scope>
</reference>
<organism>
    <name type="scientific">Squalus acanthias</name>
    <name type="common">Spiny dogfish</name>
    <dbReference type="NCBI Taxonomy" id="7797"/>
    <lineage>
        <taxon>Eukaryota</taxon>
        <taxon>Metazoa</taxon>
        <taxon>Chordata</taxon>
        <taxon>Craniata</taxon>
        <taxon>Vertebrata</taxon>
        <taxon>Chondrichthyes</taxon>
        <taxon>Elasmobranchii</taxon>
        <taxon>Squalomorphii</taxon>
        <taxon>Squaliformes</taxon>
        <taxon>Squalidae</taxon>
        <taxon>Squalus</taxon>
    </lineage>
</organism>
<feature type="peptide" id="PRO_0000015915" description="Insulin B chain">
    <location>
        <begin position="1"/>
        <end position="32"/>
    </location>
</feature>
<feature type="peptide" id="PRO_0000015916" description="Insulin A chain" evidence="1">
    <location>
        <begin position="33"/>
        <end position="54"/>
    </location>
</feature>
<feature type="disulfide bond" description="Interchain (between B and A chains)">
    <location>
        <begin position="7"/>
        <end position="39"/>
    </location>
</feature>
<feature type="disulfide bond" description="Interchain (between B and A chains)">
    <location>
        <begin position="19"/>
        <end position="52"/>
    </location>
</feature>
<feature type="disulfide bond">
    <location>
        <begin position="38"/>
        <end position="43"/>
    </location>
</feature>
<feature type="non-consecutive residues" evidence="2">
    <location>
        <begin position="32"/>
        <end position="33"/>
    </location>
</feature>